<sequence length="105" mass="12090">MSVYFPIHCPDYLRSAEMTEVMMNTPSMEEIGLNPRKDGLSYQIFPDPSDFDRCCKLKDRLPSIVVEPTEGEVESGELRWPPEEFLVQEDAQDNCEETASENKEQ</sequence>
<name>LBH_BOVIN</name>
<gene>
    <name type="primary">LBH</name>
</gene>
<dbReference type="EMBL" id="BC142246">
    <property type="protein sequence ID" value="AAI42247.1"/>
    <property type="molecule type" value="mRNA"/>
</dbReference>
<dbReference type="RefSeq" id="NP_001092622.1">
    <property type="nucleotide sequence ID" value="NM_001099152.2"/>
</dbReference>
<dbReference type="RefSeq" id="XP_005212942.1">
    <property type="nucleotide sequence ID" value="XM_005212885.3"/>
</dbReference>
<dbReference type="SMR" id="A5PJU8"/>
<dbReference type="FunCoup" id="A5PJU8">
    <property type="interactions" value="165"/>
</dbReference>
<dbReference type="STRING" id="9913.ENSBTAP00000068964"/>
<dbReference type="PaxDb" id="9913-ENSBTAP00000036858"/>
<dbReference type="Ensembl" id="ENSBTAT00000113829.1">
    <property type="protein sequence ID" value="ENSBTAP00000077918.1"/>
    <property type="gene ID" value="ENSBTAG00000069495.1"/>
</dbReference>
<dbReference type="GeneID" id="616148"/>
<dbReference type="KEGG" id="bta:616148"/>
<dbReference type="CTD" id="81606"/>
<dbReference type="VEuPathDB" id="HostDB:ENSBTAG00000026111"/>
<dbReference type="eggNOG" id="ENOG502S1QG">
    <property type="taxonomic scope" value="Eukaryota"/>
</dbReference>
<dbReference type="GeneTree" id="ENSGT00390000009189"/>
<dbReference type="HOGENOM" id="CLU_161464_0_0_1"/>
<dbReference type="InParanoid" id="A5PJU8"/>
<dbReference type="OMA" id="VFFPIHC"/>
<dbReference type="OrthoDB" id="8937789at2759"/>
<dbReference type="TreeFam" id="TF332770"/>
<dbReference type="Proteomes" id="UP000009136">
    <property type="component" value="Chromosome 11"/>
</dbReference>
<dbReference type="Bgee" id="ENSBTAG00000026111">
    <property type="expression patterns" value="Expressed in esophagus and 104 other cell types or tissues"/>
</dbReference>
<dbReference type="GO" id="GO:0005737">
    <property type="term" value="C:cytoplasm"/>
    <property type="evidence" value="ECO:0000250"/>
    <property type="project" value="UniProtKB"/>
</dbReference>
<dbReference type="GO" id="GO:0005634">
    <property type="term" value="C:nucleus"/>
    <property type="evidence" value="ECO:0000250"/>
    <property type="project" value="UniProtKB"/>
</dbReference>
<dbReference type="GO" id="GO:0032991">
    <property type="term" value="C:protein-containing complex"/>
    <property type="evidence" value="ECO:0000250"/>
    <property type="project" value="UniProtKB"/>
</dbReference>
<dbReference type="GO" id="GO:0045892">
    <property type="term" value="P:negative regulation of DNA-templated transcription"/>
    <property type="evidence" value="ECO:0000250"/>
    <property type="project" value="UniProtKB"/>
</dbReference>
<dbReference type="GO" id="GO:0045893">
    <property type="term" value="P:positive regulation of DNA-templated transcription"/>
    <property type="evidence" value="ECO:0000250"/>
    <property type="project" value="UniProtKB"/>
</dbReference>
<dbReference type="GO" id="GO:0043408">
    <property type="term" value="P:regulation of MAPK cascade"/>
    <property type="evidence" value="ECO:0000250"/>
    <property type="project" value="UniProtKB"/>
</dbReference>
<dbReference type="InterPro" id="IPR013294">
    <property type="entry name" value="LBH"/>
</dbReference>
<dbReference type="InterPro" id="IPR038990">
    <property type="entry name" value="LBH_dom"/>
</dbReference>
<dbReference type="InterPro" id="IPR042945">
    <property type="entry name" value="LBH_dom_prot"/>
</dbReference>
<dbReference type="PANTHER" id="PTHR14987:SF2">
    <property type="entry name" value="PROTEIN LBH"/>
    <property type="match status" value="1"/>
</dbReference>
<dbReference type="PANTHER" id="PTHR14987">
    <property type="entry name" value="PROTEIN LBH-RELATED"/>
    <property type="match status" value="1"/>
</dbReference>
<dbReference type="Pfam" id="PF15317">
    <property type="entry name" value="Lbh"/>
    <property type="match status" value="1"/>
</dbReference>
<dbReference type="PIRSF" id="PIRSF008130">
    <property type="entry name" value="LBH"/>
    <property type="match status" value="1"/>
</dbReference>
<dbReference type="PRINTS" id="PR01881">
    <property type="entry name" value="LBHPROTEIN"/>
</dbReference>
<protein>
    <recommendedName>
        <fullName>Protein LBH</fullName>
    </recommendedName>
</protein>
<accession>A5PJU8</accession>
<proteinExistence type="inferred from homology"/>
<reference key="1">
    <citation type="submission" date="2007-06" db="EMBL/GenBank/DDBJ databases">
        <authorList>
            <consortium name="NIH - Mammalian Gene Collection (MGC) project"/>
        </authorList>
    </citation>
    <scope>NUCLEOTIDE SEQUENCE [LARGE SCALE MRNA]</scope>
    <source>
        <strain>Hereford</strain>
        <tissue>Thymus</tissue>
    </source>
</reference>
<keyword id="KW-0963">Cytoplasm</keyword>
<keyword id="KW-0217">Developmental protein</keyword>
<keyword id="KW-0539">Nucleus</keyword>
<keyword id="KW-0597">Phosphoprotein</keyword>
<keyword id="KW-1185">Reference proteome</keyword>
<keyword id="KW-0804">Transcription</keyword>
<keyword id="KW-0805">Transcription regulation</keyword>
<comment type="function">
    <text evidence="1">Transcriptional activator.</text>
</comment>
<comment type="subcellular location">
    <subcellularLocation>
        <location evidence="1">Nucleus</location>
    </subcellularLocation>
    <subcellularLocation>
        <location evidence="1">Cytoplasm</location>
    </subcellularLocation>
</comment>
<comment type="similarity">
    <text evidence="4">Belongs to the LBH family.</text>
</comment>
<evidence type="ECO:0000250" key="1"/>
<evidence type="ECO:0000250" key="2">
    <source>
        <dbReference type="UniProtKB" id="Q53QV2"/>
    </source>
</evidence>
<evidence type="ECO:0000255" key="3"/>
<evidence type="ECO:0000305" key="4"/>
<organism>
    <name type="scientific">Bos taurus</name>
    <name type="common">Bovine</name>
    <dbReference type="NCBI Taxonomy" id="9913"/>
    <lineage>
        <taxon>Eukaryota</taxon>
        <taxon>Metazoa</taxon>
        <taxon>Chordata</taxon>
        <taxon>Craniata</taxon>
        <taxon>Vertebrata</taxon>
        <taxon>Euteleostomi</taxon>
        <taxon>Mammalia</taxon>
        <taxon>Eutheria</taxon>
        <taxon>Laurasiatheria</taxon>
        <taxon>Artiodactyla</taxon>
        <taxon>Ruminantia</taxon>
        <taxon>Pecora</taxon>
        <taxon>Bovidae</taxon>
        <taxon>Bovinae</taxon>
        <taxon>Bos</taxon>
    </lineage>
</organism>
<feature type="chain" id="PRO_0000324801" description="Protein LBH">
    <location>
        <begin position="1"/>
        <end position="105"/>
    </location>
</feature>
<feature type="domain" description="LBH" evidence="3">
    <location>
        <begin position="18"/>
        <end position="104"/>
    </location>
</feature>
<feature type="modified residue" description="Phosphoserine" evidence="2">
    <location>
        <position position="63"/>
    </location>
</feature>